<dbReference type="EMBL" id="CP000469">
    <property type="protein sequence ID" value="ABK46939.1"/>
    <property type="molecule type" value="Genomic_DNA"/>
</dbReference>
<dbReference type="RefSeq" id="WP_011715868.1">
    <property type="nucleotide sequence ID" value="NC_008577.1"/>
</dbReference>
<dbReference type="SMR" id="A0KT20"/>
<dbReference type="STRING" id="94122.Shewana3_0701"/>
<dbReference type="GeneID" id="94726691"/>
<dbReference type="KEGG" id="shn:Shewana3_0701"/>
<dbReference type="eggNOG" id="COG0360">
    <property type="taxonomic scope" value="Bacteria"/>
</dbReference>
<dbReference type="HOGENOM" id="CLU_113441_6_1_6"/>
<dbReference type="OrthoDB" id="9812702at2"/>
<dbReference type="Proteomes" id="UP000002589">
    <property type="component" value="Chromosome"/>
</dbReference>
<dbReference type="GO" id="GO:0022627">
    <property type="term" value="C:cytosolic small ribosomal subunit"/>
    <property type="evidence" value="ECO:0007669"/>
    <property type="project" value="TreeGrafter"/>
</dbReference>
<dbReference type="GO" id="GO:0070181">
    <property type="term" value="F:small ribosomal subunit rRNA binding"/>
    <property type="evidence" value="ECO:0007669"/>
    <property type="project" value="TreeGrafter"/>
</dbReference>
<dbReference type="GO" id="GO:0003735">
    <property type="term" value="F:structural constituent of ribosome"/>
    <property type="evidence" value="ECO:0007669"/>
    <property type="project" value="InterPro"/>
</dbReference>
<dbReference type="GO" id="GO:0006412">
    <property type="term" value="P:translation"/>
    <property type="evidence" value="ECO:0007669"/>
    <property type="project" value="UniProtKB-UniRule"/>
</dbReference>
<dbReference type="CDD" id="cd00473">
    <property type="entry name" value="bS6"/>
    <property type="match status" value="1"/>
</dbReference>
<dbReference type="FunFam" id="3.30.70.60:FF:000003">
    <property type="entry name" value="30S ribosomal protein S6"/>
    <property type="match status" value="1"/>
</dbReference>
<dbReference type="Gene3D" id="3.30.70.60">
    <property type="match status" value="1"/>
</dbReference>
<dbReference type="HAMAP" id="MF_00360">
    <property type="entry name" value="Ribosomal_bS6"/>
    <property type="match status" value="1"/>
</dbReference>
<dbReference type="InterPro" id="IPR000529">
    <property type="entry name" value="Ribosomal_bS6"/>
</dbReference>
<dbReference type="InterPro" id="IPR035980">
    <property type="entry name" value="Ribosomal_bS6_sf"/>
</dbReference>
<dbReference type="InterPro" id="IPR020814">
    <property type="entry name" value="Ribosomal_S6_plastid/chlpt"/>
</dbReference>
<dbReference type="InterPro" id="IPR014717">
    <property type="entry name" value="Transl_elong_EF1B/ribsomal_bS6"/>
</dbReference>
<dbReference type="NCBIfam" id="TIGR00166">
    <property type="entry name" value="S6"/>
    <property type="match status" value="1"/>
</dbReference>
<dbReference type="PANTHER" id="PTHR21011">
    <property type="entry name" value="MITOCHONDRIAL 28S RIBOSOMAL PROTEIN S6"/>
    <property type="match status" value="1"/>
</dbReference>
<dbReference type="PANTHER" id="PTHR21011:SF1">
    <property type="entry name" value="SMALL RIBOSOMAL SUBUNIT PROTEIN BS6M"/>
    <property type="match status" value="1"/>
</dbReference>
<dbReference type="Pfam" id="PF01250">
    <property type="entry name" value="Ribosomal_S6"/>
    <property type="match status" value="1"/>
</dbReference>
<dbReference type="SUPFAM" id="SSF54995">
    <property type="entry name" value="Ribosomal protein S6"/>
    <property type="match status" value="1"/>
</dbReference>
<reference key="1">
    <citation type="submission" date="2006-09" db="EMBL/GenBank/DDBJ databases">
        <title>Complete sequence of chromosome 1 of Shewanella sp. ANA-3.</title>
        <authorList>
            <person name="Copeland A."/>
            <person name="Lucas S."/>
            <person name="Lapidus A."/>
            <person name="Barry K."/>
            <person name="Detter J.C."/>
            <person name="Glavina del Rio T."/>
            <person name="Hammon N."/>
            <person name="Israni S."/>
            <person name="Dalin E."/>
            <person name="Tice H."/>
            <person name="Pitluck S."/>
            <person name="Chertkov O."/>
            <person name="Brettin T."/>
            <person name="Bruce D."/>
            <person name="Han C."/>
            <person name="Tapia R."/>
            <person name="Gilna P."/>
            <person name="Schmutz J."/>
            <person name="Larimer F."/>
            <person name="Land M."/>
            <person name="Hauser L."/>
            <person name="Kyrpides N."/>
            <person name="Kim E."/>
            <person name="Newman D."/>
            <person name="Salticov C."/>
            <person name="Konstantinidis K."/>
            <person name="Klappenback J."/>
            <person name="Tiedje J."/>
            <person name="Richardson P."/>
        </authorList>
    </citation>
    <scope>NUCLEOTIDE SEQUENCE [LARGE SCALE GENOMIC DNA]</scope>
    <source>
        <strain>ANA-3</strain>
    </source>
</reference>
<name>RS6_SHESA</name>
<gene>
    <name evidence="1" type="primary">rpsF</name>
    <name type="ordered locus">Shewana3_0701</name>
</gene>
<feature type="chain" id="PRO_1000005350" description="Small ribosomal subunit protein bS6">
    <location>
        <begin position="1"/>
        <end position="131"/>
    </location>
</feature>
<feature type="region of interest" description="Disordered" evidence="2">
    <location>
        <begin position="96"/>
        <end position="131"/>
    </location>
</feature>
<feature type="compositionally biased region" description="Basic and acidic residues" evidence="2">
    <location>
        <begin position="104"/>
        <end position="122"/>
    </location>
</feature>
<proteinExistence type="inferred from homology"/>
<accession>A0KT20</accession>
<sequence length="131" mass="15031">MRHYEIVFMVHPDQSEQVPGMIERYTGAITEANGKIHRLEDWGRRQLAYPIQDLHKAHYVLMNVEAPAETIEELETAFRFNDAVLRNMVMRTKVAVTEASPMAKAKDERDSRRGPAGDRSYDEANAEEIAE</sequence>
<comment type="function">
    <text evidence="1">Binds together with bS18 to 16S ribosomal RNA.</text>
</comment>
<comment type="similarity">
    <text evidence="1">Belongs to the bacterial ribosomal protein bS6 family.</text>
</comment>
<keyword id="KW-0687">Ribonucleoprotein</keyword>
<keyword id="KW-0689">Ribosomal protein</keyword>
<keyword id="KW-0694">RNA-binding</keyword>
<keyword id="KW-0699">rRNA-binding</keyword>
<evidence type="ECO:0000255" key="1">
    <source>
        <dbReference type="HAMAP-Rule" id="MF_00360"/>
    </source>
</evidence>
<evidence type="ECO:0000256" key="2">
    <source>
        <dbReference type="SAM" id="MobiDB-lite"/>
    </source>
</evidence>
<evidence type="ECO:0000305" key="3"/>
<protein>
    <recommendedName>
        <fullName evidence="1">Small ribosomal subunit protein bS6</fullName>
    </recommendedName>
    <alternativeName>
        <fullName evidence="3">30S ribosomal protein S6</fullName>
    </alternativeName>
</protein>
<organism>
    <name type="scientific">Shewanella sp. (strain ANA-3)</name>
    <dbReference type="NCBI Taxonomy" id="94122"/>
    <lineage>
        <taxon>Bacteria</taxon>
        <taxon>Pseudomonadati</taxon>
        <taxon>Pseudomonadota</taxon>
        <taxon>Gammaproteobacteria</taxon>
        <taxon>Alteromonadales</taxon>
        <taxon>Shewanellaceae</taxon>
        <taxon>Shewanella</taxon>
    </lineage>
</organism>